<gene>
    <name type="primary">rpsM</name>
    <name type="ordered locus">Z4668</name>
    <name type="ordered locus">ECs4163</name>
</gene>
<keyword id="KW-1185">Reference proteome</keyword>
<keyword id="KW-0687">Ribonucleoprotein</keyword>
<keyword id="KW-0689">Ribosomal protein</keyword>
<keyword id="KW-0694">RNA-binding</keyword>
<keyword id="KW-0699">rRNA-binding</keyword>
<keyword id="KW-0820">tRNA-binding</keyword>
<protein>
    <recommendedName>
        <fullName evidence="3">Small ribosomal subunit protein uS13</fullName>
    </recommendedName>
    <alternativeName>
        <fullName>30S ribosomal protein S13</fullName>
    </alternativeName>
</protein>
<name>RS13_ECO57</name>
<sequence>MARIAGINIPDHKHAVIALTSIYGVGKTRSKAILAAAGIAEDVKISELSEGQIDTLRDEVAKFVVEGDLRREISMSIKRLMDLGCYRGLRHRRGLPVRGQRTKTNARTRKGPRKPIKK</sequence>
<reference key="1">
    <citation type="journal article" date="2001" name="Nature">
        <title>Genome sequence of enterohaemorrhagic Escherichia coli O157:H7.</title>
        <authorList>
            <person name="Perna N.T."/>
            <person name="Plunkett G. III"/>
            <person name="Burland V."/>
            <person name="Mau B."/>
            <person name="Glasner J.D."/>
            <person name="Rose D.J."/>
            <person name="Mayhew G.F."/>
            <person name="Evans P.S."/>
            <person name="Gregor J."/>
            <person name="Kirkpatrick H.A."/>
            <person name="Posfai G."/>
            <person name="Hackett J."/>
            <person name="Klink S."/>
            <person name="Boutin A."/>
            <person name="Shao Y."/>
            <person name="Miller L."/>
            <person name="Grotbeck E.J."/>
            <person name="Davis N.W."/>
            <person name="Lim A."/>
            <person name="Dimalanta E.T."/>
            <person name="Potamousis K."/>
            <person name="Apodaca J."/>
            <person name="Anantharaman T.S."/>
            <person name="Lin J."/>
            <person name="Yen G."/>
            <person name="Schwartz D.C."/>
            <person name="Welch R.A."/>
            <person name="Blattner F.R."/>
        </authorList>
    </citation>
    <scope>NUCLEOTIDE SEQUENCE [LARGE SCALE GENOMIC DNA]</scope>
    <source>
        <strain>O157:H7 / EDL933 / ATCC 700927 / EHEC</strain>
    </source>
</reference>
<reference key="2">
    <citation type="journal article" date="2001" name="DNA Res.">
        <title>Complete genome sequence of enterohemorrhagic Escherichia coli O157:H7 and genomic comparison with a laboratory strain K-12.</title>
        <authorList>
            <person name="Hayashi T."/>
            <person name="Makino K."/>
            <person name="Ohnishi M."/>
            <person name="Kurokawa K."/>
            <person name="Ishii K."/>
            <person name="Yokoyama K."/>
            <person name="Han C.-G."/>
            <person name="Ohtsubo E."/>
            <person name="Nakayama K."/>
            <person name="Murata T."/>
            <person name="Tanaka M."/>
            <person name="Tobe T."/>
            <person name="Iida T."/>
            <person name="Takami H."/>
            <person name="Honda T."/>
            <person name="Sasakawa C."/>
            <person name="Ogasawara N."/>
            <person name="Yasunaga T."/>
            <person name="Kuhara S."/>
            <person name="Shiba T."/>
            <person name="Hattori M."/>
            <person name="Shinagawa H."/>
        </authorList>
    </citation>
    <scope>NUCLEOTIDE SEQUENCE [LARGE SCALE GENOMIC DNA]</scope>
    <source>
        <strain>O157:H7 / Sakai / RIMD 0509952 / EHEC</strain>
    </source>
</reference>
<evidence type="ECO:0000250" key="1"/>
<evidence type="ECO:0000256" key="2">
    <source>
        <dbReference type="SAM" id="MobiDB-lite"/>
    </source>
</evidence>
<evidence type="ECO:0000305" key="3"/>
<proteinExistence type="inferred from homology"/>
<accession>P0A7T1</accession>
<accession>P02369</accession>
<dbReference type="EMBL" id="AE005174">
    <property type="protein sequence ID" value="AAG58419.1"/>
    <property type="molecule type" value="Genomic_DNA"/>
</dbReference>
<dbReference type="EMBL" id="BA000007">
    <property type="protein sequence ID" value="BAB37586.1"/>
    <property type="molecule type" value="Genomic_DNA"/>
</dbReference>
<dbReference type="PIR" id="C91149">
    <property type="entry name" value="C91149"/>
</dbReference>
<dbReference type="PIR" id="G85994">
    <property type="entry name" value="G85994"/>
</dbReference>
<dbReference type="RefSeq" id="NP_312190.1">
    <property type="nucleotide sequence ID" value="NC_002695.1"/>
</dbReference>
<dbReference type="RefSeq" id="WP_000090775.1">
    <property type="nucleotide sequence ID" value="NZ_VOAI01000041.1"/>
</dbReference>
<dbReference type="EMDB" id="EMD-7014"/>
<dbReference type="EMDB" id="EMD-7015"/>
<dbReference type="EMDB" id="EMD-7016"/>
<dbReference type="EMDB" id="EMD-8621"/>
<dbReference type="EMDB" id="EMD-8826"/>
<dbReference type="EMDB" id="EMD-8829"/>
<dbReference type="SMR" id="P0A7T1"/>
<dbReference type="STRING" id="155864.Z4668"/>
<dbReference type="GeneID" id="915981"/>
<dbReference type="GeneID" id="93778689"/>
<dbReference type="KEGG" id="ece:Z4668"/>
<dbReference type="KEGG" id="ecs:ECs_4163"/>
<dbReference type="PATRIC" id="fig|386585.9.peg.4346"/>
<dbReference type="eggNOG" id="COG0099">
    <property type="taxonomic scope" value="Bacteria"/>
</dbReference>
<dbReference type="HOGENOM" id="CLU_103849_1_2_6"/>
<dbReference type="OMA" id="MNVKRLM"/>
<dbReference type="Proteomes" id="UP000000558">
    <property type="component" value="Chromosome"/>
</dbReference>
<dbReference type="Proteomes" id="UP000002519">
    <property type="component" value="Chromosome"/>
</dbReference>
<dbReference type="GO" id="GO:0005829">
    <property type="term" value="C:cytosol"/>
    <property type="evidence" value="ECO:0007669"/>
    <property type="project" value="TreeGrafter"/>
</dbReference>
<dbReference type="GO" id="GO:0015935">
    <property type="term" value="C:small ribosomal subunit"/>
    <property type="evidence" value="ECO:0007669"/>
    <property type="project" value="TreeGrafter"/>
</dbReference>
<dbReference type="GO" id="GO:0019843">
    <property type="term" value="F:rRNA binding"/>
    <property type="evidence" value="ECO:0007669"/>
    <property type="project" value="UniProtKB-UniRule"/>
</dbReference>
<dbReference type="GO" id="GO:0003735">
    <property type="term" value="F:structural constituent of ribosome"/>
    <property type="evidence" value="ECO:0007669"/>
    <property type="project" value="InterPro"/>
</dbReference>
<dbReference type="GO" id="GO:0000049">
    <property type="term" value="F:tRNA binding"/>
    <property type="evidence" value="ECO:0007669"/>
    <property type="project" value="UniProtKB-UniRule"/>
</dbReference>
<dbReference type="GO" id="GO:0006412">
    <property type="term" value="P:translation"/>
    <property type="evidence" value="ECO:0007669"/>
    <property type="project" value="UniProtKB-UniRule"/>
</dbReference>
<dbReference type="FunFam" id="1.10.8.50:FF:000001">
    <property type="entry name" value="30S ribosomal protein S13"/>
    <property type="match status" value="1"/>
</dbReference>
<dbReference type="FunFam" id="4.10.910.10:FF:000001">
    <property type="entry name" value="30S ribosomal protein S13"/>
    <property type="match status" value="1"/>
</dbReference>
<dbReference type="Gene3D" id="1.10.8.50">
    <property type="match status" value="1"/>
</dbReference>
<dbReference type="Gene3D" id="4.10.910.10">
    <property type="entry name" value="30s ribosomal protein s13, domain 2"/>
    <property type="match status" value="1"/>
</dbReference>
<dbReference type="HAMAP" id="MF_01315">
    <property type="entry name" value="Ribosomal_uS13"/>
    <property type="match status" value="1"/>
</dbReference>
<dbReference type="InterPro" id="IPR027437">
    <property type="entry name" value="Rbsml_uS13_C"/>
</dbReference>
<dbReference type="InterPro" id="IPR001892">
    <property type="entry name" value="Ribosomal_uS13"/>
</dbReference>
<dbReference type="InterPro" id="IPR010979">
    <property type="entry name" value="Ribosomal_uS13-like_H2TH"/>
</dbReference>
<dbReference type="InterPro" id="IPR019980">
    <property type="entry name" value="Ribosomal_uS13_bac-type"/>
</dbReference>
<dbReference type="InterPro" id="IPR018269">
    <property type="entry name" value="Ribosomal_uS13_CS"/>
</dbReference>
<dbReference type="NCBIfam" id="TIGR03631">
    <property type="entry name" value="uS13_bact"/>
    <property type="match status" value="1"/>
</dbReference>
<dbReference type="PANTHER" id="PTHR10871">
    <property type="entry name" value="30S RIBOSOMAL PROTEIN S13/40S RIBOSOMAL PROTEIN S18"/>
    <property type="match status" value="1"/>
</dbReference>
<dbReference type="PANTHER" id="PTHR10871:SF1">
    <property type="entry name" value="SMALL RIBOSOMAL SUBUNIT PROTEIN US13M"/>
    <property type="match status" value="1"/>
</dbReference>
<dbReference type="Pfam" id="PF00416">
    <property type="entry name" value="Ribosomal_S13"/>
    <property type="match status" value="1"/>
</dbReference>
<dbReference type="PIRSF" id="PIRSF002134">
    <property type="entry name" value="Ribosomal_S13"/>
    <property type="match status" value="1"/>
</dbReference>
<dbReference type="SUPFAM" id="SSF46946">
    <property type="entry name" value="S13-like H2TH domain"/>
    <property type="match status" value="1"/>
</dbReference>
<dbReference type="PROSITE" id="PS00646">
    <property type="entry name" value="RIBOSOMAL_S13_1"/>
    <property type="match status" value="1"/>
</dbReference>
<dbReference type="PROSITE" id="PS50159">
    <property type="entry name" value="RIBOSOMAL_S13_2"/>
    <property type="match status" value="1"/>
</dbReference>
<organism>
    <name type="scientific">Escherichia coli O157:H7</name>
    <dbReference type="NCBI Taxonomy" id="83334"/>
    <lineage>
        <taxon>Bacteria</taxon>
        <taxon>Pseudomonadati</taxon>
        <taxon>Pseudomonadota</taxon>
        <taxon>Gammaproteobacteria</taxon>
        <taxon>Enterobacterales</taxon>
        <taxon>Enterobacteriaceae</taxon>
        <taxon>Escherichia</taxon>
    </lineage>
</organism>
<comment type="function">
    <text evidence="1">Located at the top of the head of the 30S subunit, it contacts several helices of the 16S rRNA. In the E.coli 70S ribosome in the initiation state it has been modeled to contact the 23S rRNA (bridge B1a) and protein L5 of the 50S subunit (bridge B1b), connecting the 2 subunits; bridge B1a is broken in the model with bound EF-G, while the protein-protein contacts between S13 and L5 in B1b change. Contacts the tRNAs in the A and P sites (By similarity).</text>
</comment>
<comment type="subunit">
    <text evidence="1">Part of the 30S ribosomal subunit. Forms a loose heterodimer with protein S19. Cross-links to the P site tRNA and weakly to the A site tRNA. Forms two bridges to the 50S subunit in the 70S ribosome, contacting the 16S rRNA and protein L5 (By similarity).</text>
</comment>
<comment type="similarity">
    <text evidence="3">Belongs to the universal ribosomal protein uS13 family.</text>
</comment>
<feature type="initiator methionine" description="Removed" evidence="1">
    <location>
        <position position="1"/>
    </location>
</feature>
<feature type="chain" id="PRO_0000132091" description="Small ribosomal subunit protein uS13">
    <location>
        <begin position="2"/>
        <end position="118"/>
    </location>
</feature>
<feature type="region of interest" description="Disordered" evidence="2">
    <location>
        <begin position="94"/>
        <end position="118"/>
    </location>
</feature>